<reference key="1">
    <citation type="journal article" date="1996" name="Photochem. Photobiol.">
        <title>Characterization of psaI and psaL mutants of Synechococcus sp. strain PCC 7002: a new model for state transitions in cyanobacteria.</title>
        <authorList>
            <person name="Schluchter W.M."/>
            <person name="Shen G."/>
            <person name="Zhao J."/>
            <person name="Bryant D.A."/>
        </authorList>
    </citation>
    <scope>NUCLEOTIDE SEQUENCE [GENOMIC DNA]</scope>
</reference>
<reference key="2">
    <citation type="submission" date="2008-02" db="EMBL/GenBank/DDBJ databases">
        <title>Complete sequence of Synechococcus sp. PCC 7002.</title>
        <authorList>
            <person name="Li T."/>
            <person name="Zhao J."/>
            <person name="Zhao C."/>
            <person name="Liu Z."/>
            <person name="Zhao F."/>
            <person name="Marquardt J."/>
            <person name="Nomura C.T."/>
            <person name="Persson S."/>
            <person name="Detter J.C."/>
            <person name="Richardson P.M."/>
            <person name="Lanz C."/>
            <person name="Schuster S.C."/>
            <person name="Wang J."/>
            <person name="Li S."/>
            <person name="Huang X."/>
            <person name="Cai T."/>
            <person name="Yu Z."/>
            <person name="Luo J."/>
            <person name="Zhao J."/>
            <person name="Bryant D.A."/>
        </authorList>
    </citation>
    <scope>NUCLEOTIDE SEQUENCE [LARGE SCALE GENOMIC DNA]</scope>
    <source>
        <strain>ATCC 27264 / PCC 7002 / PR-6</strain>
    </source>
</reference>
<dbReference type="EC" id="3.1.3.-"/>
<dbReference type="EMBL" id="U58035">
    <property type="protein sequence ID" value="AAB18908.1"/>
    <property type="molecule type" value="Genomic_DNA"/>
</dbReference>
<dbReference type="EMBL" id="CP000951">
    <property type="protein sequence ID" value="ACB00599.1"/>
    <property type="molecule type" value="Genomic_DNA"/>
</dbReference>
<dbReference type="SMR" id="Q54751"/>
<dbReference type="STRING" id="32049.SYNPCC7002_A2622"/>
<dbReference type="KEGG" id="syp:SYNPCC7002_A2622"/>
<dbReference type="eggNOG" id="COG2062">
    <property type="taxonomic scope" value="Bacteria"/>
</dbReference>
<dbReference type="HOGENOM" id="CLU_084603_3_1_3"/>
<dbReference type="Proteomes" id="UP000001688">
    <property type="component" value="Chromosome"/>
</dbReference>
<dbReference type="GO" id="GO:0005737">
    <property type="term" value="C:cytoplasm"/>
    <property type="evidence" value="ECO:0007669"/>
    <property type="project" value="InterPro"/>
</dbReference>
<dbReference type="GO" id="GO:0101006">
    <property type="term" value="F:protein histidine phosphatase activity"/>
    <property type="evidence" value="ECO:0007669"/>
    <property type="project" value="InterPro"/>
</dbReference>
<dbReference type="GO" id="GO:0036211">
    <property type="term" value="P:protein modification process"/>
    <property type="evidence" value="ECO:0007669"/>
    <property type="project" value="InterPro"/>
</dbReference>
<dbReference type="CDD" id="cd07067">
    <property type="entry name" value="HP_PGM_like"/>
    <property type="match status" value="1"/>
</dbReference>
<dbReference type="Gene3D" id="3.40.50.1240">
    <property type="entry name" value="Phosphoglycerate mutase-like"/>
    <property type="match status" value="1"/>
</dbReference>
<dbReference type="InterPro" id="IPR013078">
    <property type="entry name" value="His_Pase_superF_clade-1"/>
</dbReference>
<dbReference type="InterPro" id="IPR029033">
    <property type="entry name" value="His_PPase_superfam"/>
</dbReference>
<dbReference type="InterPro" id="IPR004449">
    <property type="entry name" value="SixA"/>
</dbReference>
<dbReference type="NCBIfam" id="TIGR00249">
    <property type="entry name" value="sixA"/>
    <property type="match status" value="1"/>
</dbReference>
<dbReference type="Pfam" id="PF00300">
    <property type="entry name" value="His_Phos_1"/>
    <property type="match status" value="1"/>
</dbReference>
<dbReference type="SMART" id="SM00855">
    <property type="entry name" value="PGAM"/>
    <property type="match status" value="1"/>
</dbReference>
<dbReference type="SUPFAM" id="SSF53254">
    <property type="entry name" value="Phosphoglycerate mutase-like"/>
    <property type="match status" value="1"/>
</dbReference>
<evidence type="ECO:0000305" key="1"/>
<name>Y2622_PICP2</name>
<keyword id="KW-0378">Hydrolase</keyword>
<keyword id="KW-1185">Reference proteome</keyword>
<sequence length="165" mass="18116">MELYFFRHGIAADRADYAEDGDRPLTTKGETRTKLVAQRLQQLGLHFEGILTSPLLRARQTAEILAAAELGPHPQVFQGLAPRGSLGAFLAWLERWEAAPDAKLVLVGHQPDLGEWAEAIAFGQTGHHLNLKKAGIIGLRSGAARIQAHTDNELFLLTSPKWLLP</sequence>
<proteinExistence type="inferred from homology"/>
<protein>
    <recommendedName>
        <fullName>Uncharacterized protein SYNPCC7002_A2622</fullName>
        <ecNumber>3.1.3.-</ecNumber>
    </recommendedName>
</protein>
<comment type="similarity">
    <text evidence="1">Belongs to the SixA phosphatase family.</text>
</comment>
<feature type="chain" id="PRO_0000214570" description="Uncharacterized protein SYNPCC7002_A2622">
    <location>
        <begin position="1"/>
        <end position="165"/>
    </location>
</feature>
<gene>
    <name type="ordered locus">SYNPCC7002_A2622</name>
</gene>
<accession>Q54751</accession>
<accession>B1XLB2</accession>
<organism>
    <name type="scientific">Picosynechococcus sp. (strain ATCC 27264 / PCC 7002 / PR-6)</name>
    <name type="common">Agmenellum quadruplicatum</name>
    <dbReference type="NCBI Taxonomy" id="32049"/>
    <lineage>
        <taxon>Bacteria</taxon>
        <taxon>Bacillati</taxon>
        <taxon>Cyanobacteriota</taxon>
        <taxon>Cyanophyceae</taxon>
        <taxon>Oscillatoriophycideae</taxon>
        <taxon>Chroococcales</taxon>
        <taxon>Geminocystaceae</taxon>
        <taxon>Picosynechococcus</taxon>
    </lineage>
</organism>